<proteinExistence type="inferred from homology"/>
<protein>
    <recommendedName>
        <fullName>2-C-methyl-D-erythritol 4-phosphate cytidylyltransferase</fullName>
        <ecNumber>2.7.7.60</ecNumber>
    </recommendedName>
    <alternativeName>
        <fullName>4-diphosphocytidyl-2C-methyl-D-erythritol synthase</fullName>
    </alternativeName>
    <alternativeName>
        <fullName>MEP cytidylyltransferase</fullName>
        <shortName>MCT</shortName>
    </alternativeName>
</protein>
<organism>
    <name type="scientific">Haemophilus influenzae (strain ATCC 51907 / DSM 11121 / KW20 / Rd)</name>
    <dbReference type="NCBI Taxonomy" id="71421"/>
    <lineage>
        <taxon>Bacteria</taxon>
        <taxon>Pseudomonadati</taxon>
        <taxon>Pseudomonadota</taxon>
        <taxon>Gammaproteobacteria</taxon>
        <taxon>Pasteurellales</taxon>
        <taxon>Pasteurellaceae</taxon>
        <taxon>Haemophilus</taxon>
    </lineage>
</organism>
<comment type="function">
    <text evidence="1">Catalyzes the formation of 4-diphosphocytidyl-2-C-methyl-D-erythritol from CTP and 2-C-methyl-D-erythritol 4-phosphate (MEP).</text>
</comment>
<comment type="catalytic activity">
    <reaction>
        <text>2-C-methyl-D-erythritol 4-phosphate + CTP + H(+) = 4-CDP-2-C-methyl-D-erythritol + diphosphate</text>
        <dbReference type="Rhea" id="RHEA:13429"/>
        <dbReference type="ChEBI" id="CHEBI:15378"/>
        <dbReference type="ChEBI" id="CHEBI:33019"/>
        <dbReference type="ChEBI" id="CHEBI:37563"/>
        <dbReference type="ChEBI" id="CHEBI:57823"/>
        <dbReference type="ChEBI" id="CHEBI:58262"/>
        <dbReference type="EC" id="2.7.7.60"/>
    </reaction>
</comment>
<comment type="pathway">
    <text>Isoprenoid biosynthesis; isopentenyl diphosphate biosynthesis via DXP pathway; isopentenyl diphosphate from 1-deoxy-D-xylulose 5-phosphate: step 2/6.</text>
</comment>
<comment type="similarity">
    <text evidence="2">Belongs to the IspD/TarI cytidylyltransferase family. IspD subfamily.</text>
</comment>
<sequence>MARSIIAVLPAAGVGSRMQADKPKQYLTLLGKTLLEHTLDVMLSYPAVSKIILAVSKDDPYISTLSLDPKIQLVEGGTTRAESVLNGLNAIAEKNAWVLVHDAARPCLQHADIDKLLAIEDKQGAILAIPVTDTIKRADNQQCIVKTEDRSQLWQAMTPQFFPVDILRDALSTGIQQGANITDEASAIELAGFRPHLVAGRSDNLKVTRPEDLALAEFYLTRNKL</sequence>
<reference key="1">
    <citation type="journal article" date="1995" name="Science">
        <title>Whole-genome random sequencing and assembly of Haemophilus influenzae Rd.</title>
        <authorList>
            <person name="Fleischmann R.D."/>
            <person name="Adams M.D."/>
            <person name="White O."/>
            <person name="Clayton R.A."/>
            <person name="Kirkness E.F."/>
            <person name="Kerlavage A.R."/>
            <person name="Bult C.J."/>
            <person name="Tomb J.-F."/>
            <person name="Dougherty B.A."/>
            <person name="Merrick J.M."/>
            <person name="McKenney K."/>
            <person name="Sutton G.G."/>
            <person name="FitzHugh W."/>
            <person name="Fields C.A."/>
            <person name="Gocayne J.D."/>
            <person name="Scott J.D."/>
            <person name="Shirley R."/>
            <person name="Liu L.-I."/>
            <person name="Glodek A."/>
            <person name="Kelley J.M."/>
            <person name="Weidman J.F."/>
            <person name="Phillips C.A."/>
            <person name="Spriggs T."/>
            <person name="Hedblom E."/>
            <person name="Cotton M.D."/>
            <person name="Utterback T.R."/>
            <person name="Hanna M.C."/>
            <person name="Nguyen D.T."/>
            <person name="Saudek D.M."/>
            <person name="Brandon R.C."/>
            <person name="Fine L.D."/>
            <person name="Fritchman J.L."/>
            <person name="Fuhrmann J.L."/>
            <person name="Geoghagen N.S.M."/>
            <person name="Gnehm C.L."/>
            <person name="McDonald L.A."/>
            <person name="Small K.V."/>
            <person name="Fraser C.M."/>
            <person name="Smith H.O."/>
            <person name="Venter J.C."/>
        </authorList>
    </citation>
    <scope>NUCLEOTIDE SEQUENCE [LARGE SCALE GENOMIC DNA]</scope>
    <source>
        <strain>ATCC 51907 / DSM 11121 / KW20 / Rd</strain>
    </source>
</reference>
<gene>
    <name type="primary">ispD</name>
    <name type="ordered locus">HI_0672</name>
</gene>
<name>ISPD_HAEIN</name>
<accession>O05029</accession>
<keyword id="KW-0414">Isoprene biosynthesis</keyword>
<keyword id="KW-0548">Nucleotidyltransferase</keyword>
<keyword id="KW-1185">Reference proteome</keyword>
<keyword id="KW-0808">Transferase</keyword>
<feature type="chain" id="PRO_0000075579" description="2-C-methyl-D-erythritol 4-phosphate cytidylyltransferase">
    <location>
        <begin position="1"/>
        <end position="225"/>
    </location>
</feature>
<feature type="site" description="Transition state stabilizer" evidence="1">
    <location>
        <position position="17"/>
    </location>
</feature>
<feature type="site" description="Transition state stabilizer" evidence="1">
    <location>
        <position position="24"/>
    </location>
</feature>
<feature type="site" description="Positions MEP for the nucleophilic attack" evidence="1">
    <location>
        <position position="150"/>
    </location>
</feature>
<feature type="site" description="Positions MEP for the nucleophilic attack" evidence="1">
    <location>
        <position position="206"/>
    </location>
</feature>
<evidence type="ECO:0000250" key="1"/>
<evidence type="ECO:0000305" key="2"/>
<dbReference type="EC" id="2.7.7.60"/>
<dbReference type="EMBL" id="L42023">
    <property type="protein sequence ID" value="AAC22332.1"/>
    <property type="molecule type" value="Genomic_DNA"/>
</dbReference>
<dbReference type="PIR" id="G64156">
    <property type="entry name" value="G64156"/>
</dbReference>
<dbReference type="RefSeq" id="NP_438832.1">
    <property type="nucleotide sequence ID" value="NC_000907.1"/>
</dbReference>
<dbReference type="SMR" id="O05029"/>
<dbReference type="STRING" id="71421.HI_0672"/>
<dbReference type="EnsemblBacteria" id="AAC22332">
    <property type="protein sequence ID" value="AAC22332"/>
    <property type="gene ID" value="HI_0672"/>
</dbReference>
<dbReference type="KEGG" id="hin:HI_0672"/>
<dbReference type="PATRIC" id="fig|71421.8.peg.702"/>
<dbReference type="eggNOG" id="COG1211">
    <property type="taxonomic scope" value="Bacteria"/>
</dbReference>
<dbReference type="HOGENOM" id="CLU_061281_3_1_6"/>
<dbReference type="OrthoDB" id="9806837at2"/>
<dbReference type="PhylomeDB" id="O05029"/>
<dbReference type="BioCyc" id="HINF71421:G1GJ1-707-MONOMER"/>
<dbReference type="UniPathway" id="UPA00056">
    <property type="reaction ID" value="UER00093"/>
</dbReference>
<dbReference type="Proteomes" id="UP000000579">
    <property type="component" value="Chromosome"/>
</dbReference>
<dbReference type="GO" id="GO:0050518">
    <property type="term" value="F:2-C-methyl-D-erythritol 4-phosphate cytidylyltransferase activity"/>
    <property type="evidence" value="ECO:0000318"/>
    <property type="project" value="GO_Central"/>
</dbReference>
<dbReference type="GO" id="GO:0019288">
    <property type="term" value="P:isopentenyl diphosphate biosynthetic process, methylerythritol 4-phosphate pathway"/>
    <property type="evidence" value="ECO:0007669"/>
    <property type="project" value="UniProtKB-UniRule"/>
</dbReference>
<dbReference type="CDD" id="cd02516">
    <property type="entry name" value="CDP-ME_synthetase"/>
    <property type="match status" value="1"/>
</dbReference>
<dbReference type="FunFam" id="3.90.550.10:FF:000003">
    <property type="entry name" value="2-C-methyl-D-erythritol 4-phosphate cytidylyltransferase"/>
    <property type="match status" value="1"/>
</dbReference>
<dbReference type="Gene3D" id="3.90.550.10">
    <property type="entry name" value="Spore Coat Polysaccharide Biosynthesis Protein SpsA, Chain A"/>
    <property type="match status" value="1"/>
</dbReference>
<dbReference type="HAMAP" id="MF_00108">
    <property type="entry name" value="IspD"/>
    <property type="match status" value="1"/>
</dbReference>
<dbReference type="InterPro" id="IPR001228">
    <property type="entry name" value="IspD"/>
</dbReference>
<dbReference type="InterPro" id="IPR034683">
    <property type="entry name" value="IspD/TarI"/>
</dbReference>
<dbReference type="InterPro" id="IPR050088">
    <property type="entry name" value="IspD/TarI_cytidylyltransf_bact"/>
</dbReference>
<dbReference type="InterPro" id="IPR018294">
    <property type="entry name" value="ISPD_synthase_CS"/>
</dbReference>
<dbReference type="InterPro" id="IPR029044">
    <property type="entry name" value="Nucleotide-diphossugar_trans"/>
</dbReference>
<dbReference type="NCBIfam" id="TIGR00453">
    <property type="entry name" value="ispD"/>
    <property type="match status" value="1"/>
</dbReference>
<dbReference type="PANTHER" id="PTHR32125">
    <property type="entry name" value="2-C-METHYL-D-ERYTHRITOL 4-PHOSPHATE CYTIDYLYLTRANSFERASE, CHLOROPLASTIC"/>
    <property type="match status" value="1"/>
</dbReference>
<dbReference type="PANTHER" id="PTHR32125:SF4">
    <property type="entry name" value="2-C-METHYL-D-ERYTHRITOL 4-PHOSPHATE CYTIDYLYLTRANSFERASE, CHLOROPLASTIC"/>
    <property type="match status" value="1"/>
</dbReference>
<dbReference type="Pfam" id="PF01128">
    <property type="entry name" value="IspD"/>
    <property type="match status" value="1"/>
</dbReference>
<dbReference type="SUPFAM" id="SSF53448">
    <property type="entry name" value="Nucleotide-diphospho-sugar transferases"/>
    <property type="match status" value="1"/>
</dbReference>
<dbReference type="PROSITE" id="PS01295">
    <property type="entry name" value="ISPD"/>
    <property type="match status" value="1"/>
</dbReference>